<organism>
    <name type="scientific">Shewanella oneidensis (strain ATCC 700550 / JCM 31522 / CIP 106686 / LMG 19005 / NCIMB 14063 / MR-1)</name>
    <dbReference type="NCBI Taxonomy" id="211586"/>
    <lineage>
        <taxon>Bacteria</taxon>
        <taxon>Pseudomonadati</taxon>
        <taxon>Pseudomonadota</taxon>
        <taxon>Gammaproteobacteria</taxon>
        <taxon>Alteromonadales</taxon>
        <taxon>Shewanellaceae</taxon>
        <taxon>Shewanella</taxon>
    </lineage>
</organism>
<name>ATCC_SHEON</name>
<keyword id="KW-1185">Reference proteome</keyword>
<keyword id="KW-0346">Stress response</keyword>
<protein>
    <recommendedName>
        <fullName evidence="2">Adaptation to cold protein C</fullName>
    </recommendedName>
</protein>
<evidence type="ECO:0000269" key="1">
    <source>
    </source>
</evidence>
<evidence type="ECO:0000303" key="2">
    <source>
    </source>
</evidence>
<evidence type="ECO:0000312" key="3">
    <source>
        <dbReference type="EMBL" id="AAN54898.2"/>
    </source>
</evidence>
<accession>Q8EFW9</accession>
<dbReference type="EMBL" id="AE014299">
    <property type="protein sequence ID" value="AAN54898.2"/>
    <property type="molecule type" value="Genomic_DNA"/>
</dbReference>
<dbReference type="RefSeq" id="NP_717454.2">
    <property type="nucleotide sequence ID" value="NC_004347.2"/>
</dbReference>
<dbReference type="RefSeq" id="WP_011071961.1">
    <property type="nucleotide sequence ID" value="NC_004347.2"/>
</dbReference>
<dbReference type="STRING" id="211586.SO_1846"/>
<dbReference type="PaxDb" id="211586-SO_1846"/>
<dbReference type="KEGG" id="son:SO_1846"/>
<dbReference type="PATRIC" id="fig|211586.12.peg.1775"/>
<dbReference type="eggNOG" id="ENOG502Z91X">
    <property type="taxonomic scope" value="Bacteria"/>
</dbReference>
<dbReference type="HOGENOM" id="CLU_926328_0_0_6"/>
<dbReference type="OrthoDB" id="5756936at2"/>
<dbReference type="BioCyc" id="SONE211586:G1GMP-1695-MONOMER"/>
<dbReference type="Proteomes" id="UP000008186">
    <property type="component" value="Chromosome"/>
</dbReference>
<comment type="function">
    <text evidence="1">Involved in cold adaptation.</text>
</comment>
<comment type="activity regulation">
    <text evidence="1">Interaction with AtcJ stabilizes AtcC.</text>
</comment>
<comment type="subunit">
    <text evidence="1">Interacts with the C-terminal extension of AtcJ (PubMed:31482142). Also interacts with AtcB, but not with AtcA (PubMed:31482142).</text>
</comment>
<comment type="induction">
    <text evidence="1">Part of the atcJABC operon (PubMed:31482142). The operon is constitutively expressed, and expression shows only a very slight increase at low temperature (PubMed:31482142).</text>
</comment>
<comment type="disruption phenotype">
    <text evidence="1">Deletion of the gene leads to a dramatically reduced growth at low temperature.</text>
</comment>
<reference key="1">
    <citation type="journal article" date="2002" name="Nat. Biotechnol.">
        <title>Genome sequence of the dissimilatory metal ion-reducing bacterium Shewanella oneidensis.</title>
        <authorList>
            <person name="Heidelberg J.F."/>
            <person name="Paulsen I.T."/>
            <person name="Nelson K.E."/>
            <person name="Gaidos E.J."/>
            <person name="Nelson W.C."/>
            <person name="Read T.D."/>
            <person name="Eisen J.A."/>
            <person name="Seshadri R."/>
            <person name="Ward N.L."/>
            <person name="Methe B.A."/>
            <person name="Clayton R.A."/>
            <person name="Meyer T."/>
            <person name="Tsapin A."/>
            <person name="Scott J."/>
            <person name="Beanan M.J."/>
            <person name="Brinkac L.M."/>
            <person name="Daugherty S.C."/>
            <person name="DeBoy R.T."/>
            <person name="Dodson R.J."/>
            <person name="Durkin A.S."/>
            <person name="Haft D.H."/>
            <person name="Kolonay J.F."/>
            <person name="Madupu R."/>
            <person name="Peterson J.D."/>
            <person name="Umayam L.A."/>
            <person name="White O."/>
            <person name="Wolf A.M."/>
            <person name="Vamathevan J.J."/>
            <person name="Weidman J.F."/>
            <person name="Impraim M."/>
            <person name="Lee K."/>
            <person name="Berry K.J."/>
            <person name="Lee C."/>
            <person name="Mueller J."/>
            <person name="Khouri H.M."/>
            <person name="Gill J."/>
            <person name="Utterback T.R."/>
            <person name="McDonald L.A."/>
            <person name="Feldblyum T.V."/>
            <person name="Smith H.O."/>
            <person name="Venter J.C."/>
            <person name="Nealson K.H."/>
            <person name="Fraser C.M."/>
        </authorList>
    </citation>
    <scope>NUCLEOTIDE SEQUENCE [LARGE SCALE GENOMIC DNA]</scope>
    <source>
        <strain>ATCC 700550 / JCM 31522 / CIP 106686 / LMG 19005 / NCIMB 14063 / MR-1</strain>
    </source>
</reference>
<reference key="2">
    <citation type="journal article" date="2019" name="Commun. Biol.">
        <title>Cold adaptation in the environmental bacterium Shewanella oneidensis is controlled by a J-domain co-chaperone protein network.</title>
        <authorList>
            <person name="Maillot N.J."/>
            <person name="Honore F.A."/>
            <person name="Byrne D."/>
            <person name="Mejean V."/>
            <person name="Genest O."/>
        </authorList>
    </citation>
    <scope>FUNCTION</scope>
    <scope>ACTIVITY REGULATION</scope>
    <scope>INTERACTION WITH ATCJ AND ATCB</scope>
    <scope>INDUCTION</scope>
    <scope>DISRUPTION PHENOTYPE</scope>
    <source>
        <strain>MR1-R</strain>
    </source>
</reference>
<proteinExistence type="evidence at protein level"/>
<feature type="chain" id="PRO_0000458836" description="Adaptation to cold protein C">
    <location>
        <begin position="1"/>
        <end position="298"/>
    </location>
</feature>
<gene>
    <name evidence="2" type="primary">atcC</name>
    <name evidence="3" type="ordered locus">SO_1846</name>
</gene>
<sequence length="298" mass="33762">MQLVLRDIDQGPFLSKVLAKGQADDTLSGEQLAQIKSKAILMSLKLADKFYNKYKMHLLEQAAHDVIGVVSLGLMELSNQDQQQALRLLITADGVVKCFQKGWSMLSVVSKHKLVNSKSLYGDVDKFLLEQVSTPPDADEWLGYEAYQDALVEHQRQQSIAALMAQFYAQTSYDPLDFLNLESVLAEAVLYRMLFDNAKVRQDLKKRIAKISLQDEWFSLEYIEQQTQQALAELPAELADTIGKDLGKNFAPALLRTLHFAKSYRELLLNDASPERLERFEHKEGLVGLLGWPLYIVL</sequence>